<sequence length="122" mass="13106">MSKALLRFVRLSPTKARLIARQIQGMNAELAIASLEFTPNKAARVLSKVVASAVANGSLDAKSTLIVSCRVDAGPVLRRSIPRAKGRATAIRKPTSHVFVEVAEGKEMKSSKSHKKNQAEGK</sequence>
<organism>
    <name type="scientific">Helicobacter pylori (strain G27)</name>
    <dbReference type="NCBI Taxonomy" id="563041"/>
    <lineage>
        <taxon>Bacteria</taxon>
        <taxon>Pseudomonadati</taxon>
        <taxon>Campylobacterota</taxon>
        <taxon>Epsilonproteobacteria</taxon>
        <taxon>Campylobacterales</taxon>
        <taxon>Helicobacteraceae</taxon>
        <taxon>Helicobacter</taxon>
    </lineage>
</organism>
<gene>
    <name evidence="1" type="primary">rplV</name>
    <name type="ordered locus">HPG27_1263</name>
</gene>
<reference key="1">
    <citation type="journal article" date="2009" name="J. Bacteriol.">
        <title>The complete genome sequence of Helicobacter pylori strain G27.</title>
        <authorList>
            <person name="Baltrus D.A."/>
            <person name="Amieva M.R."/>
            <person name="Covacci A."/>
            <person name="Lowe T.M."/>
            <person name="Merrell D.S."/>
            <person name="Ottemann K.M."/>
            <person name="Stein M."/>
            <person name="Salama N.R."/>
            <person name="Guillemin K."/>
        </authorList>
    </citation>
    <scope>NUCLEOTIDE SEQUENCE [LARGE SCALE GENOMIC DNA]</scope>
    <source>
        <strain>G27</strain>
    </source>
</reference>
<proteinExistence type="inferred from homology"/>
<protein>
    <recommendedName>
        <fullName evidence="1">Large ribosomal subunit protein uL22</fullName>
    </recommendedName>
    <alternativeName>
        <fullName evidence="3">50S ribosomal protein L22</fullName>
    </alternativeName>
</protein>
<feature type="chain" id="PRO_1000142270" description="Large ribosomal subunit protein uL22">
    <location>
        <begin position="1"/>
        <end position="122"/>
    </location>
</feature>
<feature type="region of interest" description="Disordered" evidence="2">
    <location>
        <begin position="102"/>
        <end position="122"/>
    </location>
</feature>
<dbReference type="EMBL" id="CP001173">
    <property type="protein sequence ID" value="ACI28011.1"/>
    <property type="molecule type" value="Genomic_DNA"/>
</dbReference>
<dbReference type="RefSeq" id="WP_000030379.1">
    <property type="nucleotide sequence ID" value="NC_011333.1"/>
</dbReference>
<dbReference type="SMR" id="B5Z8W2"/>
<dbReference type="KEGG" id="hpg:HPG27_1263"/>
<dbReference type="HOGENOM" id="CLU_083987_3_2_7"/>
<dbReference type="Proteomes" id="UP000001735">
    <property type="component" value="Chromosome"/>
</dbReference>
<dbReference type="GO" id="GO:0022625">
    <property type="term" value="C:cytosolic large ribosomal subunit"/>
    <property type="evidence" value="ECO:0007669"/>
    <property type="project" value="TreeGrafter"/>
</dbReference>
<dbReference type="GO" id="GO:0019843">
    <property type="term" value="F:rRNA binding"/>
    <property type="evidence" value="ECO:0007669"/>
    <property type="project" value="UniProtKB-UniRule"/>
</dbReference>
<dbReference type="GO" id="GO:0003735">
    <property type="term" value="F:structural constituent of ribosome"/>
    <property type="evidence" value="ECO:0007669"/>
    <property type="project" value="InterPro"/>
</dbReference>
<dbReference type="GO" id="GO:0006412">
    <property type="term" value="P:translation"/>
    <property type="evidence" value="ECO:0007669"/>
    <property type="project" value="UniProtKB-UniRule"/>
</dbReference>
<dbReference type="CDD" id="cd00336">
    <property type="entry name" value="Ribosomal_L22"/>
    <property type="match status" value="1"/>
</dbReference>
<dbReference type="FunFam" id="3.90.470.10:FF:000007">
    <property type="entry name" value="50S ribosomal protein L22"/>
    <property type="match status" value="1"/>
</dbReference>
<dbReference type="Gene3D" id="3.90.470.10">
    <property type="entry name" value="Ribosomal protein L22/L17"/>
    <property type="match status" value="1"/>
</dbReference>
<dbReference type="HAMAP" id="MF_01331_B">
    <property type="entry name" value="Ribosomal_uL22_B"/>
    <property type="match status" value="1"/>
</dbReference>
<dbReference type="InterPro" id="IPR001063">
    <property type="entry name" value="Ribosomal_uL22"/>
</dbReference>
<dbReference type="InterPro" id="IPR005727">
    <property type="entry name" value="Ribosomal_uL22_bac/chlpt-type"/>
</dbReference>
<dbReference type="InterPro" id="IPR047867">
    <property type="entry name" value="Ribosomal_uL22_bac/org-type"/>
</dbReference>
<dbReference type="InterPro" id="IPR018260">
    <property type="entry name" value="Ribosomal_uL22_CS"/>
</dbReference>
<dbReference type="InterPro" id="IPR036394">
    <property type="entry name" value="Ribosomal_uL22_sf"/>
</dbReference>
<dbReference type="NCBIfam" id="TIGR01044">
    <property type="entry name" value="rplV_bact"/>
    <property type="match status" value="1"/>
</dbReference>
<dbReference type="PANTHER" id="PTHR13501">
    <property type="entry name" value="CHLOROPLAST 50S RIBOSOMAL PROTEIN L22-RELATED"/>
    <property type="match status" value="1"/>
</dbReference>
<dbReference type="PANTHER" id="PTHR13501:SF8">
    <property type="entry name" value="LARGE RIBOSOMAL SUBUNIT PROTEIN UL22M"/>
    <property type="match status" value="1"/>
</dbReference>
<dbReference type="Pfam" id="PF00237">
    <property type="entry name" value="Ribosomal_L22"/>
    <property type="match status" value="1"/>
</dbReference>
<dbReference type="SUPFAM" id="SSF54843">
    <property type="entry name" value="Ribosomal protein L22"/>
    <property type="match status" value="1"/>
</dbReference>
<dbReference type="PROSITE" id="PS00464">
    <property type="entry name" value="RIBOSOMAL_L22"/>
    <property type="match status" value="1"/>
</dbReference>
<evidence type="ECO:0000255" key="1">
    <source>
        <dbReference type="HAMAP-Rule" id="MF_01331"/>
    </source>
</evidence>
<evidence type="ECO:0000256" key="2">
    <source>
        <dbReference type="SAM" id="MobiDB-lite"/>
    </source>
</evidence>
<evidence type="ECO:0000305" key="3"/>
<keyword id="KW-1185">Reference proteome</keyword>
<keyword id="KW-0687">Ribonucleoprotein</keyword>
<keyword id="KW-0689">Ribosomal protein</keyword>
<keyword id="KW-0694">RNA-binding</keyword>
<keyword id="KW-0699">rRNA-binding</keyword>
<comment type="function">
    <text evidence="1">This protein binds specifically to 23S rRNA; its binding is stimulated by other ribosomal proteins, e.g. L4, L17, and L20. It is important during the early stages of 50S assembly. It makes multiple contacts with different domains of the 23S rRNA in the assembled 50S subunit and ribosome (By similarity).</text>
</comment>
<comment type="function">
    <text evidence="1">The globular domain of the protein is located near the polypeptide exit tunnel on the outside of the subunit, while an extended beta-hairpin is found that lines the wall of the exit tunnel in the center of the 70S ribosome.</text>
</comment>
<comment type="subunit">
    <text evidence="1">Part of the 50S ribosomal subunit.</text>
</comment>
<comment type="similarity">
    <text evidence="1">Belongs to the universal ribosomal protein uL22 family.</text>
</comment>
<name>RL22_HELPG</name>
<accession>B5Z8W2</accession>